<name>CLPP_SALPA</name>
<proteinExistence type="inferred from homology"/>
<dbReference type="EC" id="3.4.21.92" evidence="2"/>
<dbReference type="EMBL" id="CP000026">
    <property type="protein sequence ID" value="AAV78159.1"/>
    <property type="molecule type" value="Genomic_DNA"/>
</dbReference>
<dbReference type="RefSeq" id="WP_000122256.1">
    <property type="nucleotide sequence ID" value="NC_006511.1"/>
</dbReference>
<dbReference type="SMR" id="Q5PFN4"/>
<dbReference type="MEROPS" id="S14.001"/>
<dbReference type="KEGG" id="spt:SPA2274"/>
<dbReference type="HOGENOM" id="CLU_058707_3_2_6"/>
<dbReference type="Proteomes" id="UP000008185">
    <property type="component" value="Chromosome"/>
</dbReference>
<dbReference type="GO" id="GO:0005737">
    <property type="term" value="C:cytoplasm"/>
    <property type="evidence" value="ECO:0007669"/>
    <property type="project" value="UniProtKB-SubCell"/>
</dbReference>
<dbReference type="GO" id="GO:0009368">
    <property type="term" value="C:endopeptidase Clp complex"/>
    <property type="evidence" value="ECO:0007669"/>
    <property type="project" value="TreeGrafter"/>
</dbReference>
<dbReference type="GO" id="GO:0004176">
    <property type="term" value="F:ATP-dependent peptidase activity"/>
    <property type="evidence" value="ECO:0007669"/>
    <property type="project" value="InterPro"/>
</dbReference>
<dbReference type="GO" id="GO:0051117">
    <property type="term" value="F:ATPase binding"/>
    <property type="evidence" value="ECO:0007669"/>
    <property type="project" value="TreeGrafter"/>
</dbReference>
<dbReference type="GO" id="GO:0004252">
    <property type="term" value="F:serine-type endopeptidase activity"/>
    <property type="evidence" value="ECO:0007669"/>
    <property type="project" value="UniProtKB-UniRule"/>
</dbReference>
<dbReference type="GO" id="GO:0006515">
    <property type="term" value="P:protein quality control for misfolded or incompletely synthesized proteins"/>
    <property type="evidence" value="ECO:0007669"/>
    <property type="project" value="TreeGrafter"/>
</dbReference>
<dbReference type="CDD" id="cd07017">
    <property type="entry name" value="S14_ClpP_2"/>
    <property type="match status" value="1"/>
</dbReference>
<dbReference type="FunFam" id="3.90.226.10:FF:000001">
    <property type="entry name" value="ATP-dependent Clp protease proteolytic subunit"/>
    <property type="match status" value="1"/>
</dbReference>
<dbReference type="Gene3D" id="3.90.226.10">
    <property type="entry name" value="2-enoyl-CoA Hydratase, Chain A, domain 1"/>
    <property type="match status" value="1"/>
</dbReference>
<dbReference type="HAMAP" id="MF_00444">
    <property type="entry name" value="ClpP"/>
    <property type="match status" value="1"/>
</dbReference>
<dbReference type="InterPro" id="IPR001907">
    <property type="entry name" value="ClpP"/>
</dbReference>
<dbReference type="InterPro" id="IPR029045">
    <property type="entry name" value="ClpP/crotonase-like_dom_sf"/>
</dbReference>
<dbReference type="InterPro" id="IPR023562">
    <property type="entry name" value="ClpP/TepA"/>
</dbReference>
<dbReference type="InterPro" id="IPR033135">
    <property type="entry name" value="ClpP_His_AS"/>
</dbReference>
<dbReference type="InterPro" id="IPR018215">
    <property type="entry name" value="ClpP_Ser_AS"/>
</dbReference>
<dbReference type="NCBIfam" id="TIGR00493">
    <property type="entry name" value="clpP"/>
    <property type="match status" value="1"/>
</dbReference>
<dbReference type="NCBIfam" id="NF001368">
    <property type="entry name" value="PRK00277.1"/>
    <property type="match status" value="1"/>
</dbReference>
<dbReference type="NCBIfam" id="NF009205">
    <property type="entry name" value="PRK12553.1"/>
    <property type="match status" value="1"/>
</dbReference>
<dbReference type="PANTHER" id="PTHR10381">
    <property type="entry name" value="ATP-DEPENDENT CLP PROTEASE PROTEOLYTIC SUBUNIT"/>
    <property type="match status" value="1"/>
</dbReference>
<dbReference type="PANTHER" id="PTHR10381:SF70">
    <property type="entry name" value="ATP-DEPENDENT CLP PROTEASE PROTEOLYTIC SUBUNIT"/>
    <property type="match status" value="1"/>
</dbReference>
<dbReference type="Pfam" id="PF00574">
    <property type="entry name" value="CLP_protease"/>
    <property type="match status" value="1"/>
</dbReference>
<dbReference type="PRINTS" id="PR00127">
    <property type="entry name" value="CLPPROTEASEP"/>
</dbReference>
<dbReference type="SUPFAM" id="SSF52096">
    <property type="entry name" value="ClpP/crotonase"/>
    <property type="match status" value="1"/>
</dbReference>
<dbReference type="PROSITE" id="PS00382">
    <property type="entry name" value="CLP_PROTEASE_HIS"/>
    <property type="match status" value="1"/>
</dbReference>
<dbReference type="PROSITE" id="PS00381">
    <property type="entry name" value="CLP_PROTEASE_SER"/>
    <property type="match status" value="1"/>
</dbReference>
<gene>
    <name evidence="2" type="primary">clpP</name>
    <name type="ordered locus">SPA2274</name>
</gene>
<reference key="1">
    <citation type="journal article" date="2004" name="Nat. Genet.">
        <title>Comparison of genome degradation in Paratyphi A and Typhi, human-restricted serovars of Salmonella enterica that cause typhoid.</title>
        <authorList>
            <person name="McClelland M."/>
            <person name="Sanderson K.E."/>
            <person name="Clifton S.W."/>
            <person name="Latreille P."/>
            <person name="Porwollik S."/>
            <person name="Sabo A."/>
            <person name="Meyer R."/>
            <person name="Bieri T."/>
            <person name="Ozersky P."/>
            <person name="McLellan M."/>
            <person name="Harkins C.R."/>
            <person name="Wang C."/>
            <person name="Nguyen C."/>
            <person name="Berghoff A."/>
            <person name="Elliott G."/>
            <person name="Kohlberg S."/>
            <person name="Strong C."/>
            <person name="Du F."/>
            <person name="Carter J."/>
            <person name="Kremizki C."/>
            <person name="Layman D."/>
            <person name="Leonard S."/>
            <person name="Sun H."/>
            <person name="Fulton L."/>
            <person name="Nash W."/>
            <person name="Miner T."/>
            <person name="Minx P."/>
            <person name="Delehaunty K."/>
            <person name="Fronick C."/>
            <person name="Magrini V."/>
            <person name="Nhan M."/>
            <person name="Warren W."/>
            <person name="Florea L."/>
            <person name="Spieth J."/>
            <person name="Wilson R.K."/>
        </authorList>
    </citation>
    <scope>NUCLEOTIDE SEQUENCE [LARGE SCALE GENOMIC DNA]</scope>
    <source>
        <strain>ATCC 9150 / SARB42</strain>
    </source>
</reference>
<comment type="function">
    <text evidence="2">Cleaves peptides in various proteins in a process that requires ATP hydrolysis. Has a chymotrypsin-like activity. Plays a major role in the degradation of misfolded proteins.</text>
</comment>
<comment type="catalytic activity">
    <reaction evidence="2">
        <text>Hydrolysis of proteins to small peptides in the presence of ATP and magnesium. alpha-casein is the usual test substrate. In the absence of ATP, only oligopeptides shorter than five residues are hydrolyzed (such as succinyl-Leu-Tyr-|-NHMec, and Leu-Tyr-Leu-|-Tyr-Trp, in which cleavage of the -Tyr-|-Leu- and -Tyr-|-Trp bonds also occurs).</text>
        <dbReference type="EC" id="3.4.21.92"/>
    </reaction>
</comment>
<comment type="subunit">
    <text evidence="2">Fourteen ClpP subunits assemble into 2 heptameric rings which stack back to back to give a disk-like structure with a central cavity, resembling the structure of eukaryotic proteasomes. Component of the ClpAP and ClpXP complexes.</text>
</comment>
<comment type="subcellular location">
    <subcellularLocation>
        <location evidence="2">Cytoplasm</location>
    </subcellularLocation>
</comment>
<comment type="similarity">
    <text evidence="2">Belongs to the peptidase S14 family.</text>
</comment>
<sequence length="207" mass="23159">MSYSGERDNLAPHMALVPMVIEQTSRGERSFDIYSRLLKERVIFLTGQVEDHMANLIVAQMLFLEAENPEKDIYLYINSPGGVITAGISIYDTMQFIKPDVSTICMGQAASMGAFLLTAGAKGKRFCLPNSRVMIHQPLGGYQGQATDIEIHAREILKVKGRMNELMAHHTGQSLEQIERDTERDRFLSAPEAVEYGLVDSILTHRN</sequence>
<keyword id="KW-0963">Cytoplasm</keyword>
<keyword id="KW-0378">Hydrolase</keyword>
<keyword id="KW-0645">Protease</keyword>
<keyword id="KW-0720">Serine protease</keyword>
<keyword id="KW-0865">Zymogen</keyword>
<accession>Q5PFN4</accession>
<protein>
    <recommendedName>
        <fullName evidence="2">ATP-dependent Clp protease proteolytic subunit</fullName>
        <ecNumber evidence="2">3.4.21.92</ecNumber>
    </recommendedName>
    <alternativeName>
        <fullName evidence="2">Endopeptidase Clp</fullName>
    </alternativeName>
</protein>
<feature type="propeptide" id="PRO_0000268018" evidence="1">
    <location>
        <begin position="1"/>
        <end position="14"/>
    </location>
</feature>
<feature type="chain" id="PRO_0000179643" description="ATP-dependent Clp protease proteolytic subunit">
    <location>
        <begin position="15"/>
        <end position="207"/>
    </location>
</feature>
<feature type="active site" description="Nucleophile" evidence="2">
    <location>
        <position position="111"/>
    </location>
</feature>
<feature type="active site" evidence="2">
    <location>
        <position position="136"/>
    </location>
</feature>
<organism>
    <name type="scientific">Salmonella paratyphi A (strain ATCC 9150 / SARB42)</name>
    <dbReference type="NCBI Taxonomy" id="295319"/>
    <lineage>
        <taxon>Bacteria</taxon>
        <taxon>Pseudomonadati</taxon>
        <taxon>Pseudomonadota</taxon>
        <taxon>Gammaproteobacteria</taxon>
        <taxon>Enterobacterales</taxon>
        <taxon>Enterobacteriaceae</taxon>
        <taxon>Salmonella</taxon>
    </lineage>
</organism>
<evidence type="ECO:0000250" key="1"/>
<evidence type="ECO:0000255" key="2">
    <source>
        <dbReference type="HAMAP-Rule" id="MF_00444"/>
    </source>
</evidence>